<gene>
    <name evidence="1" type="primary">gfcR</name>
    <name type="ordered locus">Msm_0883</name>
</gene>
<protein>
    <recommendedName>
        <fullName evidence="1">Transcriptional regulator GfcR</fullName>
    </recommendedName>
</protein>
<sequence>MKQKLIKKAQELRQHGFTTGEIADELNVSMDTARWLTLQKPAEEKPEAPVDFFINWKSLGGNSTRLRYVSGALSDMALSHGEAEVILGIAVSGIPFATMMADFLEDMSGVETSLAVYHPHKHRKEKDDGEGAISTNFGSVEGKKVVIVDDVITSGKTVKEVIHAVKDHGGEPIAVTVLIDKSGLSEIEEVPIESLIKVGRL</sequence>
<dbReference type="EMBL" id="CP000678">
    <property type="protein sequence ID" value="ABQ87088.1"/>
    <property type="molecule type" value="Genomic_DNA"/>
</dbReference>
<dbReference type="RefSeq" id="WP_011954146.1">
    <property type="nucleotide sequence ID" value="NZ_CP117965.1"/>
</dbReference>
<dbReference type="SMR" id="A5ULL0"/>
<dbReference type="STRING" id="420247.Msm_0883"/>
<dbReference type="EnsemblBacteria" id="ABQ87088">
    <property type="protein sequence ID" value="ABQ87088"/>
    <property type="gene ID" value="Msm_0883"/>
</dbReference>
<dbReference type="KEGG" id="msi:Msm_0883"/>
<dbReference type="PATRIC" id="fig|420247.28.peg.880"/>
<dbReference type="eggNOG" id="arCOG00028">
    <property type="taxonomic scope" value="Archaea"/>
</dbReference>
<dbReference type="HOGENOM" id="CLU_111001_0_0_2"/>
<dbReference type="BioCyc" id="MSMI420247:GHWZ-901-MONOMER"/>
<dbReference type="Proteomes" id="UP000001992">
    <property type="component" value="Chromosome"/>
</dbReference>
<dbReference type="GO" id="GO:0005737">
    <property type="term" value="C:cytoplasm"/>
    <property type="evidence" value="ECO:0007669"/>
    <property type="project" value="TreeGrafter"/>
</dbReference>
<dbReference type="GO" id="GO:0003677">
    <property type="term" value="F:DNA binding"/>
    <property type="evidence" value="ECO:0007669"/>
    <property type="project" value="UniProtKB-UniRule"/>
</dbReference>
<dbReference type="GO" id="GO:0004588">
    <property type="term" value="F:orotate phosphoribosyltransferase activity"/>
    <property type="evidence" value="ECO:0007669"/>
    <property type="project" value="TreeGrafter"/>
</dbReference>
<dbReference type="GO" id="GO:0006207">
    <property type="term" value="P:'de novo' pyrimidine nucleobase biosynthetic process"/>
    <property type="evidence" value="ECO:0007669"/>
    <property type="project" value="TreeGrafter"/>
</dbReference>
<dbReference type="GO" id="GO:0006221">
    <property type="term" value="P:pyrimidine nucleotide biosynthetic process"/>
    <property type="evidence" value="ECO:0007669"/>
    <property type="project" value="TreeGrafter"/>
</dbReference>
<dbReference type="GO" id="GO:0046132">
    <property type="term" value="P:pyrimidine ribonucleoside biosynthetic process"/>
    <property type="evidence" value="ECO:0007669"/>
    <property type="project" value="TreeGrafter"/>
</dbReference>
<dbReference type="GO" id="GO:0010468">
    <property type="term" value="P:regulation of gene expression"/>
    <property type="evidence" value="ECO:0007669"/>
    <property type="project" value="UniProtKB-UniRule"/>
</dbReference>
<dbReference type="CDD" id="cd06223">
    <property type="entry name" value="PRTases_typeI"/>
    <property type="match status" value="1"/>
</dbReference>
<dbReference type="Gene3D" id="3.40.50.2020">
    <property type="match status" value="1"/>
</dbReference>
<dbReference type="HAMAP" id="MF_01214">
    <property type="entry name" value="GfcR"/>
    <property type="match status" value="1"/>
</dbReference>
<dbReference type="InterPro" id="IPR022854">
    <property type="entry name" value="GfcR-like"/>
</dbReference>
<dbReference type="InterPro" id="IPR000836">
    <property type="entry name" value="PRibTrfase_dom"/>
</dbReference>
<dbReference type="InterPro" id="IPR029057">
    <property type="entry name" value="PRTase-like"/>
</dbReference>
<dbReference type="NCBIfam" id="NF002620">
    <property type="entry name" value="PRK02277.1"/>
    <property type="match status" value="1"/>
</dbReference>
<dbReference type="PANTHER" id="PTHR46683">
    <property type="entry name" value="OROTATE PHOSPHORIBOSYLTRANSFERASE 1-RELATED"/>
    <property type="match status" value="1"/>
</dbReference>
<dbReference type="PANTHER" id="PTHR46683:SF1">
    <property type="entry name" value="OROTATE PHOSPHORIBOSYLTRANSFERASE 1-RELATED"/>
    <property type="match status" value="1"/>
</dbReference>
<dbReference type="Pfam" id="PF00156">
    <property type="entry name" value="Pribosyltran"/>
    <property type="match status" value="1"/>
</dbReference>
<dbReference type="SUPFAM" id="SSF53271">
    <property type="entry name" value="PRTase-like"/>
    <property type="match status" value="1"/>
</dbReference>
<dbReference type="PROSITE" id="PS00103">
    <property type="entry name" value="PUR_PYR_PR_TRANSFER"/>
    <property type="match status" value="1"/>
</dbReference>
<comment type="domain">
    <text evidence="1">Contains an N-terminal DNA-binding winged helix-turn-helix domain and a C-terminal regulatory domain (or effector binding domain) resembling phosphoribosyltransferase (PRT) domain.</text>
</comment>
<comment type="similarity">
    <text evidence="1">Belongs to the purine/pyrimidine phosphoribosyltransferase family. GfcR subfamily.</text>
</comment>
<evidence type="ECO:0000255" key="1">
    <source>
        <dbReference type="HAMAP-Rule" id="MF_01214"/>
    </source>
</evidence>
<feature type="chain" id="PRO_1000066451" description="Transcriptional regulator GfcR">
    <location>
        <begin position="1"/>
        <end position="201"/>
    </location>
</feature>
<organism>
    <name type="scientific">Methanobrevibacter smithii (strain ATCC 35061 / DSM 861 / OCM 144 / PS)</name>
    <dbReference type="NCBI Taxonomy" id="420247"/>
    <lineage>
        <taxon>Archaea</taxon>
        <taxon>Methanobacteriati</taxon>
        <taxon>Methanobacteriota</taxon>
        <taxon>Methanomada group</taxon>
        <taxon>Methanobacteria</taxon>
        <taxon>Methanobacteriales</taxon>
        <taxon>Methanobacteriaceae</taxon>
        <taxon>Methanobrevibacter</taxon>
    </lineage>
</organism>
<accession>A5ULL0</accession>
<keyword id="KW-0238">DNA-binding</keyword>
<keyword id="KW-0804">Transcription</keyword>
<keyword id="KW-0805">Transcription regulation</keyword>
<name>GFCR_METS3</name>
<reference key="1">
    <citation type="journal article" date="2007" name="Proc. Natl. Acad. Sci. U.S.A.">
        <title>Genomic and metabolic adaptations of Methanobrevibacter smithii to the human gut.</title>
        <authorList>
            <person name="Samuel B.S."/>
            <person name="Hansen E.E."/>
            <person name="Manchester J.K."/>
            <person name="Coutinho P.M."/>
            <person name="Henrissat B."/>
            <person name="Fulton R."/>
            <person name="Latreille P."/>
            <person name="Kim K."/>
            <person name="Wilson R.K."/>
            <person name="Gordon J.I."/>
        </authorList>
    </citation>
    <scope>NUCLEOTIDE SEQUENCE [LARGE SCALE GENOMIC DNA]</scope>
    <source>
        <strain>ATCC 35061 / DSM 861 / OCM 144 / PS</strain>
    </source>
</reference>
<proteinExistence type="inferred from homology"/>